<sequence>MLLCIDTGNTNTVFSVWDGEKFVGLWRISTDHRRTADEYFVWLSTLISLQKLELNIDACIISSTAPRVVFNLRVLCNRYFDTRPLVVGKPDCLLPVAPRVDFGTVVGPDRLVNTWGAFERHGPDLIVVDFGTATTFDVVDTDGAYVGGVIAPGVNLSLEALHMGAASLPHVDVTMPAKVIGTNTVACIQSGIFWGYIGLVQGVVDKIRLERGRPMKVIATGGLAPLFDQGFDLFDAIEDDLTMHGLRLIHDYNKEMGNG</sequence>
<comment type="function">
    <text evidence="1">Catalyzes the phosphorylation of pantothenate (Pan), the first step in CoA biosynthesis.</text>
</comment>
<comment type="catalytic activity">
    <reaction evidence="1">
        <text>(R)-pantothenate + ATP = (R)-4'-phosphopantothenate + ADP + H(+)</text>
        <dbReference type="Rhea" id="RHEA:16373"/>
        <dbReference type="ChEBI" id="CHEBI:10986"/>
        <dbReference type="ChEBI" id="CHEBI:15378"/>
        <dbReference type="ChEBI" id="CHEBI:29032"/>
        <dbReference type="ChEBI" id="CHEBI:30616"/>
        <dbReference type="ChEBI" id="CHEBI:456216"/>
        <dbReference type="EC" id="2.7.1.33"/>
    </reaction>
</comment>
<comment type="cofactor">
    <cofactor evidence="1">
        <name>NH4(+)</name>
        <dbReference type="ChEBI" id="CHEBI:28938"/>
    </cofactor>
    <cofactor evidence="1">
        <name>K(+)</name>
        <dbReference type="ChEBI" id="CHEBI:29103"/>
    </cofactor>
    <text evidence="1">A monovalent cation. Ammonium or potassium.</text>
</comment>
<comment type="pathway">
    <text evidence="1">Cofactor biosynthesis; coenzyme A biosynthesis; CoA from (R)-pantothenate: step 1/5.</text>
</comment>
<comment type="subunit">
    <text evidence="1">Homodimer.</text>
</comment>
<comment type="subcellular location">
    <subcellularLocation>
        <location evidence="1">Cytoplasm</location>
    </subcellularLocation>
</comment>
<comment type="similarity">
    <text evidence="1">Belongs to the type III pantothenate kinase family.</text>
</comment>
<dbReference type="EC" id="2.7.1.33" evidence="1"/>
<dbReference type="EMBL" id="CP000489">
    <property type="protein sequence ID" value="ABL70321.1"/>
    <property type="molecule type" value="Genomic_DNA"/>
</dbReference>
<dbReference type="RefSeq" id="WP_011748516.1">
    <property type="nucleotide sequence ID" value="NC_008686.1"/>
</dbReference>
<dbReference type="SMR" id="A1B477"/>
<dbReference type="STRING" id="318586.Pden_2229"/>
<dbReference type="EnsemblBacteria" id="ABL70321">
    <property type="protein sequence ID" value="ABL70321"/>
    <property type="gene ID" value="Pden_2229"/>
</dbReference>
<dbReference type="GeneID" id="93450627"/>
<dbReference type="KEGG" id="pde:Pden_2229"/>
<dbReference type="eggNOG" id="COG1521">
    <property type="taxonomic scope" value="Bacteria"/>
</dbReference>
<dbReference type="HOGENOM" id="CLU_066627_1_0_5"/>
<dbReference type="OrthoDB" id="9804707at2"/>
<dbReference type="UniPathway" id="UPA00241">
    <property type="reaction ID" value="UER00352"/>
</dbReference>
<dbReference type="Proteomes" id="UP000000361">
    <property type="component" value="Chromosome 1"/>
</dbReference>
<dbReference type="GO" id="GO:0005737">
    <property type="term" value="C:cytoplasm"/>
    <property type="evidence" value="ECO:0007669"/>
    <property type="project" value="UniProtKB-SubCell"/>
</dbReference>
<dbReference type="GO" id="GO:0005524">
    <property type="term" value="F:ATP binding"/>
    <property type="evidence" value="ECO:0007669"/>
    <property type="project" value="UniProtKB-UniRule"/>
</dbReference>
<dbReference type="GO" id="GO:0046872">
    <property type="term" value="F:metal ion binding"/>
    <property type="evidence" value="ECO:0007669"/>
    <property type="project" value="UniProtKB-KW"/>
</dbReference>
<dbReference type="GO" id="GO:0004594">
    <property type="term" value="F:pantothenate kinase activity"/>
    <property type="evidence" value="ECO:0007669"/>
    <property type="project" value="UniProtKB-UniRule"/>
</dbReference>
<dbReference type="GO" id="GO:0015937">
    <property type="term" value="P:coenzyme A biosynthetic process"/>
    <property type="evidence" value="ECO:0007669"/>
    <property type="project" value="UniProtKB-UniRule"/>
</dbReference>
<dbReference type="CDD" id="cd24015">
    <property type="entry name" value="ASKHA_NBD_PanK-III"/>
    <property type="match status" value="1"/>
</dbReference>
<dbReference type="Gene3D" id="3.30.420.40">
    <property type="match status" value="2"/>
</dbReference>
<dbReference type="HAMAP" id="MF_01274">
    <property type="entry name" value="Pantothen_kinase_3"/>
    <property type="match status" value="1"/>
</dbReference>
<dbReference type="InterPro" id="IPR043129">
    <property type="entry name" value="ATPase_NBD"/>
</dbReference>
<dbReference type="InterPro" id="IPR004619">
    <property type="entry name" value="Type_III_PanK"/>
</dbReference>
<dbReference type="NCBIfam" id="TIGR00671">
    <property type="entry name" value="baf"/>
    <property type="match status" value="1"/>
</dbReference>
<dbReference type="NCBIfam" id="NF009844">
    <property type="entry name" value="PRK13318.1-2"/>
    <property type="match status" value="1"/>
</dbReference>
<dbReference type="NCBIfam" id="NF009855">
    <property type="entry name" value="PRK13321.1"/>
    <property type="match status" value="1"/>
</dbReference>
<dbReference type="PANTHER" id="PTHR34265">
    <property type="entry name" value="TYPE III PANTOTHENATE KINASE"/>
    <property type="match status" value="1"/>
</dbReference>
<dbReference type="PANTHER" id="PTHR34265:SF1">
    <property type="entry name" value="TYPE III PANTOTHENATE KINASE"/>
    <property type="match status" value="1"/>
</dbReference>
<dbReference type="Pfam" id="PF03309">
    <property type="entry name" value="Pan_kinase"/>
    <property type="match status" value="1"/>
</dbReference>
<dbReference type="SUPFAM" id="SSF53067">
    <property type="entry name" value="Actin-like ATPase domain"/>
    <property type="match status" value="2"/>
</dbReference>
<name>COAX_PARDP</name>
<reference key="1">
    <citation type="submission" date="2006-12" db="EMBL/GenBank/DDBJ databases">
        <title>Complete sequence of chromosome 1 of Paracoccus denitrificans PD1222.</title>
        <authorList>
            <person name="Copeland A."/>
            <person name="Lucas S."/>
            <person name="Lapidus A."/>
            <person name="Barry K."/>
            <person name="Detter J.C."/>
            <person name="Glavina del Rio T."/>
            <person name="Hammon N."/>
            <person name="Israni S."/>
            <person name="Dalin E."/>
            <person name="Tice H."/>
            <person name="Pitluck S."/>
            <person name="Munk A.C."/>
            <person name="Brettin T."/>
            <person name="Bruce D."/>
            <person name="Han C."/>
            <person name="Tapia R."/>
            <person name="Gilna P."/>
            <person name="Schmutz J."/>
            <person name="Larimer F."/>
            <person name="Land M."/>
            <person name="Hauser L."/>
            <person name="Kyrpides N."/>
            <person name="Lykidis A."/>
            <person name="Spiro S."/>
            <person name="Richardson D.J."/>
            <person name="Moir J.W.B."/>
            <person name="Ferguson S.J."/>
            <person name="van Spanning R.J.M."/>
            <person name="Richardson P."/>
        </authorList>
    </citation>
    <scope>NUCLEOTIDE SEQUENCE [LARGE SCALE GENOMIC DNA]</scope>
    <source>
        <strain>Pd 1222</strain>
    </source>
</reference>
<protein>
    <recommendedName>
        <fullName evidence="1">Type III pantothenate kinase</fullName>
        <ecNumber evidence="1">2.7.1.33</ecNumber>
    </recommendedName>
    <alternativeName>
        <fullName evidence="1">PanK-III</fullName>
    </alternativeName>
    <alternativeName>
        <fullName evidence="1">Pantothenic acid kinase</fullName>
    </alternativeName>
</protein>
<evidence type="ECO:0000255" key="1">
    <source>
        <dbReference type="HAMAP-Rule" id="MF_01274"/>
    </source>
</evidence>
<proteinExistence type="inferred from homology"/>
<gene>
    <name evidence="1" type="primary">coaX</name>
    <name type="ordered locus">Pden_2229</name>
</gene>
<accession>A1B477</accession>
<feature type="chain" id="PRO_1000054399" description="Type III pantothenate kinase">
    <location>
        <begin position="1"/>
        <end position="259"/>
    </location>
</feature>
<feature type="active site" description="Proton acceptor" evidence="1">
    <location>
        <position position="109"/>
    </location>
</feature>
<feature type="binding site" evidence="1">
    <location>
        <begin position="6"/>
        <end position="13"/>
    </location>
    <ligand>
        <name>ATP</name>
        <dbReference type="ChEBI" id="CHEBI:30616"/>
    </ligand>
</feature>
<feature type="binding site" evidence="1">
    <location>
        <begin position="107"/>
        <end position="110"/>
    </location>
    <ligand>
        <name>substrate</name>
    </ligand>
</feature>
<feature type="binding site" evidence="1">
    <location>
        <position position="129"/>
    </location>
    <ligand>
        <name>K(+)</name>
        <dbReference type="ChEBI" id="CHEBI:29103"/>
    </ligand>
</feature>
<feature type="binding site" evidence="1">
    <location>
        <position position="132"/>
    </location>
    <ligand>
        <name>ATP</name>
        <dbReference type="ChEBI" id="CHEBI:30616"/>
    </ligand>
</feature>
<feature type="binding site" evidence="1">
    <location>
        <position position="184"/>
    </location>
    <ligand>
        <name>substrate</name>
    </ligand>
</feature>
<keyword id="KW-0067">ATP-binding</keyword>
<keyword id="KW-0173">Coenzyme A biosynthesis</keyword>
<keyword id="KW-0963">Cytoplasm</keyword>
<keyword id="KW-0418">Kinase</keyword>
<keyword id="KW-0479">Metal-binding</keyword>
<keyword id="KW-0547">Nucleotide-binding</keyword>
<keyword id="KW-0630">Potassium</keyword>
<keyword id="KW-1185">Reference proteome</keyword>
<keyword id="KW-0808">Transferase</keyword>
<organism>
    <name type="scientific">Paracoccus denitrificans (strain Pd 1222)</name>
    <dbReference type="NCBI Taxonomy" id="318586"/>
    <lineage>
        <taxon>Bacteria</taxon>
        <taxon>Pseudomonadati</taxon>
        <taxon>Pseudomonadota</taxon>
        <taxon>Alphaproteobacteria</taxon>
        <taxon>Rhodobacterales</taxon>
        <taxon>Paracoccaceae</taxon>
        <taxon>Paracoccus</taxon>
    </lineage>
</organism>